<organism>
    <name type="scientific">Haemophilus influenzae (strain 86-028NP)</name>
    <dbReference type="NCBI Taxonomy" id="281310"/>
    <lineage>
        <taxon>Bacteria</taxon>
        <taxon>Pseudomonadati</taxon>
        <taxon>Pseudomonadota</taxon>
        <taxon>Gammaproteobacteria</taxon>
        <taxon>Pasteurellales</taxon>
        <taxon>Pasteurellaceae</taxon>
        <taxon>Haemophilus</taxon>
    </lineage>
</organism>
<name>RNH_HAEI8</name>
<keyword id="KW-0963">Cytoplasm</keyword>
<keyword id="KW-0255">Endonuclease</keyword>
<keyword id="KW-0378">Hydrolase</keyword>
<keyword id="KW-0460">Magnesium</keyword>
<keyword id="KW-0479">Metal-binding</keyword>
<keyword id="KW-0540">Nuclease</keyword>
<reference key="1">
    <citation type="journal article" date="2005" name="J. Bacteriol.">
        <title>Genomic sequence of an otitis media isolate of nontypeable Haemophilus influenzae: comparative study with H. influenzae serotype d, strain KW20.</title>
        <authorList>
            <person name="Harrison A."/>
            <person name="Dyer D.W."/>
            <person name="Gillaspy A."/>
            <person name="Ray W.C."/>
            <person name="Mungur R."/>
            <person name="Carson M.B."/>
            <person name="Zhong H."/>
            <person name="Gipson J."/>
            <person name="Gipson M."/>
            <person name="Johnson L.S."/>
            <person name="Lewis L."/>
            <person name="Bakaletz L.O."/>
            <person name="Munson R.S. Jr."/>
        </authorList>
    </citation>
    <scope>NUCLEOTIDE SEQUENCE [LARGE SCALE GENOMIC DNA]</scope>
    <source>
        <strain>86-028NP</strain>
    </source>
</reference>
<proteinExistence type="inferred from homology"/>
<evidence type="ECO:0000255" key="1">
    <source>
        <dbReference type="HAMAP-Rule" id="MF_00042"/>
    </source>
</evidence>
<evidence type="ECO:0000255" key="2">
    <source>
        <dbReference type="PROSITE-ProRule" id="PRU00408"/>
    </source>
</evidence>
<sequence>MQKQIEIFTDGSCLGNPGAGGIGAVLRYKQHEKMLSKGYFKTTNNRMELRAVIEALNTLKEPCLITLYSDSQYMKNGITKWIFNWKKNNWKASSGKPVKNQDLWIALDESIQRHKINWQWVKGHAGHRENEICDELAKKGAENPTLEDMGYIEE</sequence>
<accession>Q4QP49</accession>
<feature type="chain" id="PRO_0000195378" description="Ribonuclease H">
    <location>
        <begin position="1"/>
        <end position="154"/>
    </location>
</feature>
<feature type="domain" description="RNase H type-1" evidence="2">
    <location>
        <begin position="1"/>
        <end position="142"/>
    </location>
</feature>
<feature type="binding site" evidence="1">
    <location>
        <position position="10"/>
    </location>
    <ligand>
        <name>Mg(2+)</name>
        <dbReference type="ChEBI" id="CHEBI:18420"/>
        <label>1</label>
    </ligand>
</feature>
<feature type="binding site" evidence="1">
    <location>
        <position position="10"/>
    </location>
    <ligand>
        <name>Mg(2+)</name>
        <dbReference type="ChEBI" id="CHEBI:18420"/>
        <label>2</label>
    </ligand>
</feature>
<feature type="binding site" evidence="1">
    <location>
        <position position="48"/>
    </location>
    <ligand>
        <name>Mg(2+)</name>
        <dbReference type="ChEBI" id="CHEBI:18420"/>
        <label>1</label>
    </ligand>
</feature>
<feature type="binding site" evidence="1">
    <location>
        <position position="70"/>
    </location>
    <ligand>
        <name>Mg(2+)</name>
        <dbReference type="ChEBI" id="CHEBI:18420"/>
        <label>1</label>
    </ligand>
</feature>
<feature type="binding site" evidence="1">
    <location>
        <position position="134"/>
    </location>
    <ligand>
        <name>Mg(2+)</name>
        <dbReference type="ChEBI" id="CHEBI:18420"/>
        <label>2</label>
    </ligand>
</feature>
<comment type="function">
    <text evidence="1">Endonuclease that specifically degrades the RNA of RNA-DNA hybrids.</text>
</comment>
<comment type="catalytic activity">
    <reaction evidence="1">
        <text>Endonucleolytic cleavage to 5'-phosphomonoester.</text>
        <dbReference type="EC" id="3.1.26.4"/>
    </reaction>
</comment>
<comment type="cofactor">
    <cofactor evidence="1">
        <name>Mg(2+)</name>
        <dbReference type="ChEBI" id="CHEBI:18420"/>
    </cofactor>
    <text evidence="1">Binds 1 Mg(2+) ion per subunit. May bind a second metal ion at a regulatory site, or after substrate binding.</text>
</comment>
<comment type="subunit">
    <text evidence="1">Monomer.</text>
</comment>
<comment type="subcellular location">
    <subcellularLocation>
        <location evidence="1">Cytoplasm</location>
    </subcellularLocation>
</comment>
<comment type="similarity">
    <text evidence="1">Belongs to the RNase H family.</text>
</comment>
<gene>
    <name evidence="1" type="primary">rnhA</name>
    <name type="ordered locus">NTHI0224</name>
</gene>
<dbReference type="EC" id="3.1.26.4" evidence="1"/>
<dbReference type="EMBL" id="CP000057">
    <property type="protein sequence ID" value="AAX87198.1"/>
    <property type="molecule type" value="Genomic_DNA"/>
</dbReference>
<dbReference type="RefSeq" id="WP_005687959.1">
    <property type="nucleotide sequence ID" value="NC_007146.2"/>
</dbReference>
<dbReference type="SMR" id="Q4QP49"/>
<dbReference type="GeneID" id="93219074"/>
<dbReference type="KEGG" id="hit:NTHI0224"/>
<dbReference type="HOGENOM" id="CLU_030894_6_0_6"/>
<dbReference type="Proteomes" id="UP000002525">
    <property type="component" value="Chromosome"/>
</dbReference>
<dbReference type="GO" id="GO:0005737">
    <property type="term" value="C:cytoplasm"/>
    <property type="evidence" value="ECO:0007669"/>
    <property type="project" value="UniProtKB-SubCell"/>
</dbReference>
<dbReference type="GO" id="GO:0000287">
    <property type="term" value="F:magnesium ion binding"/>
    <property type="evidence" value="ECO:0007669"/>
    <property type="project" value="UniProtKB-UniRule"/>
</dbReference>
<dbReference type="GO" id="GO:0003676">
    <property type="term" value="F:nucleic acid binding"/>
    <property type="evidence" value="ECO:0007669"/>
    <property type="project" value="InterPro"/>
</dbReference>
<dbReference type="GO" id="GO:0004523">
    <property type="term" value="F:RNA-DNA hybrid ribonuclease activity"/>
    <property type="evidence" value="ECO:0007669"/>
    <property type="project" value="UniProtKB-UniRule"/>
</dbReference>
<dbReference type="GO" id="GO:0043137">
    <property type="term" value="P:DNA replication, removal of RNA primer"/>
    <property type="evidence" value="ECO:0007669"/>
    <property type="project" value="TreeGrafter"/>
</dbReference>
<dbReference type="CDD" id="cd09278">
    <property type="entry name" value="RNase_HI_prokaryote_like"/>
    <property type="match status" value="1"/>
</dbReference>
<dbReference type="FunFam" id="3.30.420.10:FF:000008">
    <property type="entry name" value="Ribonuclease H"/>
    <property type="match status" value="1"/>
</dbReference>
<dbReference type="Gene3D" id="3.30.420.10">
    <property type="entry name" value="Ribonuclease H-like superfamily/Ribonuclease H"/>
    <property type="match status" value="1"/>
</dbReference>
<dbReference type="HAMAP" id="MF_00042">
    <property type="entry name" value="RNase_H"/>
    <property type="match status" value="1"/>
</dbReference>
<dbReference type="InterPro" id="IPR050092">
    <property type="entry name" value="RNase_H"/>
</dbReference>
<dbReference type="InterPro" id="IPR012337">
    <property type="entry name" value="RNaseH-like_sf"/>
</dbReference>
<dbReference type="InterPro" id="IPR002156">
    <property type="entry name" value="RNaseH_domain"/>
</dbReference>
<dbReference type="InterPro" id="IPR036397">
    <property type="entry name" value="RNaseH_sf"/>
</dbReference>
<dbReference type="InterPro" id="IPR022892">
    <property type="entry name" value="RNaseHI"/>
</dbReference>
<dbReference type="NCBIfam" id="NF001236">
    <property type="entry name" value="PRK00203.1"/>
    <property type="match status" value="1"/>
</dbReference>
<dbReference type="PANTHER" id="PTHR10642">
    <property type="entry name" value="RIBONUCLEASE H1"/>
    <property type="match status" value="1"/>
</dbReference>
<dbReference type="PANTHER" id="PTHR10642:SF26">
    <property type="entry name" value="RIBONUCLEASE H1"/>
    <property type="match status" value="1"/>
</dbReference>
<dbReference type="Pfam" id="PF00075">
    <property type="entry name" value="RNase_H"/>
    <property type="match status" value="1"/>
</dbReference>
<dbReference type="SUPFAM" id="SSF53098">
    <property type="entry name" value="Ribonuclease H-like"/>
    <property type="match status" value="1"/>
</dbReference>
<dbReference type="PROSITE" id="PS50879">
    <property type="entry name" value="RNASE_H_1"/>
    <property type="match status" value="1"/>
</dbReference>
<protein>
    <recommendedName>
        <fullName evidence="1">Ribonuclease H</fullName>
        <shortName evidence="1">RNase H</shortName>
        <ecNumber evidence="1">3.1.26.4</ecNumber>
    </recommendedName>
</protein>